<accession>A6TRK2</accession>
<evidence type="ECO:0000255" key="1">
    <source>
        <dbReference type="HAMAP-Rule" id="MF_01343"/>
    </source>
</evidence>
<evidence type="ECO:0000305" key="2"/>
<reference key="1">
    <citation type="journal article" date="2016" name="Genome Announc.">
        <title>Complete genome sequence of Alkaliphilus metalliredigens strain QYMF, an alkaliphilic and metal-reducing bacterium isolated from borax-contaminated leachate ponds.</title>
        <authorList>
            <person name="Hwang C."/>
            <person name="Copeland A."/>
            <person name="Lucas S."/>
            <person name="Lapidus A."/>
            <person name="Barry K."/>
            <person name="Detter J.C."/>
            <person name="Glavina Del Rio T."/>
            <person name="Hammon N."/>
            <person name="Israni S."/>
            <person name="Dalin E."/>
            <person name="Tice H."/>
            <person name="Pitluck S."/>
            <person name="Chertkov O."/>
            <person name="Brettin T."/>
            <person name="Bruce D."/>
            <person name="Han C."/>
            <person name="Schmutz J."/>
            <person name="Larimer F."/>
            <person name="Land M.L."/>
            <person name="Hauser L."/>
            <person name="Kyrpides N."/>
            <person name="Mikhailova N."/>
            <person name="Ye Q."/>
            <person name="Zhou J."/>
            <person name="Richardson P."/>
            <person name="Fields M.W."/>
        </authorList>
    </citation>
    <scope>NUCLEOTIDE SEQUENCE [LARGE SCALE GENOMIC DNA]</scope>
    <source>
        <strain>QYMF</strain>
    </source>
</reference>
<proteinExistence type="inferred from homology"/>
<gene>
    <name evidence="1" type="primary">rpsO</name>
    <name type="ordered locus">Amet_2668</name>
</gene>
<keyword id="KW-1185">Reference proteome</keyword>
<keyword id="KW-0687">Ribonucleoprotein</keyword>
<keyword id="KW-0689">Ribosomal protein</keyword>
<keyword id="KW-0694">RNA-binding</keyword>
<keyword id="KW-0699">rRNA-binding</keyword>
<comment type="function">
    <text evidence="1">One of the primary rRNA binding proteins, it binds directly to 16S rRNA where it helps nucleate assembly of the platform of the 30S subunit by binding and bridging several RNA helices of the 16S rRNA.</text>
</comment>
<comment type="function">
    <text evidence="1">Forms an intersubunit bridge (bridge B4) with the 23S rRNA of the 50S subunit in the ribosome.</text>
</comment>
<comment type="subunit">
    <text evidence="1">Part of the 30S ribosomal subunit. Forms a bridge to the 50S subunit in the 70S ribosome, contacting the 23S rRNA.</text>
</comment>
<comment type="similarity">
    <text evidence="1">Belongs to the universal ribosomal protein uS15 family.</text>
</comment>
<organism>
    <name type="scientific">Alkaliphilus metalliredigens (strain QYMF)</name>
    <dbReference type="NCBI Taxonomy" id="293826"/>
    <lineage>
        <taxon>Bacteria</taxon>
        <taxon>Bacillati</taxon>
        <taxon>Bacillota</taxon>
        <taxon>Clostridia</taxon>
        <taxon>Peptostreptococcales</taxon>
        <taxon>Natronincolaceae</taxon>
        <taxon>Alkaliphilus</taxon>
    </lineage>
</organism>
<sequence length="87" mass="10383">MERTEKKSIIDTFKTHENDTGSPEVQIALLTDRINHLNDHLKTHKKDHHSRRGLLKMVGQRRNLLNYLKDNQIERYREVIARLGLRK</sequence>
<dbReference type="EMBL" id="CP000724">
    <property type="protein sequence ID" value="ABR48820.1"/>
    <property type="molecule type" value="Genomic_DNA"/>
</dbReference>
<dbReference type="RefSeq" id="WP_012063793.1">
    <property type="nucleotide sequence ID" value="NC_009633.1"/>
</dbReference>
<dbReference type="SMR" id="A6TRK2"/>
<dbReference type="STRING" id="293826.Amet_2668"/>
<dbReference type="KEGG" id="amt:Amet_2668"/>
<dbReference type="eggNOG" id="COG0184">
    <property type="taxonomic scope" value="Bacteria"/>
</dbReference>
<dbReference type="HOGENOM" id="CLU_148518_0_0_9"/>
<dbReference type="OrthoDB" id="9799262at2"/>
<dbReference type="Proteomes" id="UP000001572">
    <property type="component" value="Chromosome"/>
</dbReference>
<dbReference type="GO" id="GO:0022627">
    <property type="term" value="C:cytosolic small ribosomal subunit"/>
    <property type="evidence" value="ECO:0007669"/>
    <property type="project" value="TreeGrafter"/>
</dbReference>
<dbReference type="GO" id="GO:0019843">
    <property type="term" value="F:rRNA binding"/>
    <property type="evidence" value="ECO:0007669"/>
    <property type="project" value="UniProtKB-UniRule"/>
</dbReference>
<dbReference type="GO" id="GO:0003735">
    <property type="term" value="F:structural constituent of ribosome"/>
    <property type="evidence" value="ECO:0007669"/>
    <property type="project" value="InterPro"/>
</dbReference>
<dbReference type="GO" id="GO:0006412">
    <property type="term" value="P:translation"/>
    <property type="evidence" value="ECO:0007669"/>
    <property type="project" value="UniProtKB-UniRule"/>
</dbReference>
<dbReference type="CDD" id="cd00353">
    <property type="entry name" value="Ribosomal_S15p_S13e"/>
    <property type="match status" value="1"/>
</dbReference>
<dbReference type="FunFam" id="1.10.287.10:FF:000002">
    <property type="entry name" value="30S ribosomal protein S15"/>
    <property type="match status" value="1"/>
</dbReference>
<dbReference type="Gene3D" id="6.10.250.3130">
    <property type="match status" value="1"/>
</dbReference>
<dbReference type="Gene3D" id="1.10.287.10">
    <property type="entry name" value="S15/NS1, RNA-binding"/>
    <property type="match status" value="1"/>
</dbReference>
<dbReference type="HAMAP" id="MF_01343_B">
    <property type="entry name" value="Ribosomal_uS15_B"/>
    <property type="match status" value="1"/>
</dbReference>
<dbReference type="InterPro" id="IPR000589">
    <property type="entry name" value="Ribosomal_uS15"/>
</dbReference>
<dbReference type="InterPro" id="IPR005290">
    <property type="entry name" value="Ribosomal_uS15_bac-type"/>
</dbReference>
<dbReference type="InterPro" id="IPR009068">
    <property type="entry name" value="uS15_NS1_RNA-bd_sf"/>
</dbReference>
<dbReference type="NCBIfam" id="TIGR00952">
    <property type="entry name" value="S15_bact"/>
    <property type="match status" value="1"/>
</dbReference>
<dbReference type="PANTHER" id="PTHR23321">
    <property type="entry name" value="RIBOSOMAL PROTEIN S15, BACTERIAL AND ORGANELLAR"/>
    <property type="match status" value="1"/>
</dbReference>
<dbReference type="PANTHER" id="PTHR23321:SF26">
    <property type="entry name" value="SMALL RIBOSOMAL SUBUNIT PROTEIN US15M"/>
    <property type="match status" value="1"/>
</dbReference>
<dbReference type="Pfam" id="PF00312">
    <property type="entry name" value="Ribosomal_S15"/>
    <property type="match status" value="1"/>
</dbReference>
<dbReference type="SMART" id="SM01387">
    <property type="entry name" value="Ribosomal_S15"/>
    <property type="match status" value="1"/>
</dbReference>
<dbReference type="SUPFAM" id="SSF47060">
    <property type="entry name" value="S15/NS1 RNA-binding domain"/>
    <property type="match status" value="1"/>
</dbReference>
<dbReference type="PROSITE" id="PS00362">
    <property type="entry name" value="RIBOSOMAL_S15"/>
    <property type="match status" value="1"/>
</dbReference>
<name>RS15_ALKMQ</name>
<feature type="chain" id="PRO_0000354178" description="Small ribosomal subunit protein uS15">
    <location>
        <begin position="1"/>
        <end position="87"/>
    </location>
</feature>
<protein>
    <recommendedName>
        <fullName evidence="1">Small ribosomal subunit protein uS15</fullName>
    </recommendedName>
    <alternativeName>
        <fullName evidence="2">30S ribosomal protein S15</fullName>
    </alternativeName>
</protein>